<comment type="function">
    <text evidence="1">Catalyzes the condensation of only one isopentenyl pyrophosphate (IPP) unit in the cis configuration to E-geranyl diphosphate (E-GPP) generating the 15 carbon product (2Z,6E)-farnesyl diphosphate (Z-FPP or EZ-FPP). Z-FPP is the precursor of decaprenyl diphosphate, which has a central role in the biosynthesis of the mycobacterial cell wall (By similarity).</text>
</comment>
<comment type="catalytic activity">
    <reaction>
        <text>isopentenyl diphosphate + (2E)-geranyl diphosphate = (2Z,6E)-farnesyl diphosphate + diphosphate</text>
        <dbReference type="Rhea" id="RHEA:23300"/>
        <dbReference type="ChEBI" id="CHEBI:33019"/>
        <dbReference type="ChEBI" id="CHEBI:58057"/>
        <dbReference type="ChEBI" id="CHEBI:128769"/>
        <dbReference type="ChEBI" id="CHEBI:162247"/>
        <dbReference type="EC" id="2.5.1.68"/>
    </reaction>
</comment>
<comment type="cofactor">
    <cofactor evidence="1">
        <name>Mg(2+)</name>
        <dbReference type="ChEBI" id="CHEBI:18420"/>
    </cofactor>
    <text evidence="1">Binds 2 magnesium ions per subunit.</text>
</comment>
<comment type="subunit">
    <text evidence="1">Homodimer.</text>
</comment>
<comment type="subcellular location">
    <subcellularLocation>
        <location evidence="1">Cytoplasm</location>
    </subcellularLocation>
    <subcellularLocation>
        <location evidence="1">Cell membrane</location>
    </subcellularLocation>
</comment>
<comment type="similarity">
    <text evidence="2">Belongs to the UPP synthase family. Z-FPP synthase subfamily.</text>
</comment>
<sequence length="262" mass="29410">MEIIPPRLKEPLYRLYELRLRQGLAASKSDLPRHIAVLCDGNRRWARSAGYDDVSYGYRMGAAKIAEMLRWCHEAGIELATVYLLSTENLQRDPDELAALIEIITDVVEEICAPANHWSVRTVGDLGLIGEEPARRLRGAVESTPEVASFHVNVAVGYGGRREIVDAVRALLSKELANGATAEELVDAVTVEGISENLYTSGQPDPDLVIRTSGEQRLSGFLLWQSAYSEMWFTEAHWPAFRHVDFLRALRDYSARHRSYGR</sequence>
<evidence type="ECO:0000250" key="1"/>
<evidence type="ECO:0000305" key="2"/>
<reference key="1">
    <citation type="journal article" date="2002" name="J. Bacteriol.">
        <title>Whole-genome comparison of Mycobacterium tuberculosis clinical and laboratory strains.</title>
        <authorList>
            <person name="Fleischmann R.D."/>
            <person name="Alland D."/>
            <person name="Eisen J.A."/>
            <person name="Carpenter L."/>
            <person name="White O."/>
            <person name="Peterson J.D."/>
            <person name="DeBoy R.T."/>
            <person name="Dodson R.J."/>
            <person name="Gwinn M.L."/>
            <person name="Haft D.H."/>
            <person name="Hickey E.K."/>
            <person name="Kolonay J.F."/>
            <person name="Nelson W.C."/>
            <person name="Umayam L.A."/>
            <person name="Ermolaeva M.D."/>
            <person name="Salzberg S.L."/>
            <person name="Delcher A."/>
            <person name="Utterback T.R."/>
            <person name="Weidman J.F."/>
            <person name="Khouri H.M."/>
            <person name="Gill J."/>
            <person name="Mikula A."/>
            <person name="Bishai W."/>
            <person name="Jacobs W.R. Jr."/>
            <person name="Venter J.C."/>
            <person name="Fraser C.M."/>
        </authorList>
    </citation>
    <scope>NUCLEOTIDE SEQUENCE [LARGE SCALE GENOMIC DNA]</scope>
    <source>
        <strain>CDC 1551 / Oshkosh</strain>
    </source>
</reference>
<protein>
    <recommendedName>
        <fullName>(2Z,6E)-farnesyl diphosphate synthase</fullName>
        <ecNumber>2.5.1.68</ecNumber>
    </recommendedName>
    <alternativeName>
        <fullName>Short-chain Z-isoprenyl diphosphate synthase</fullName>
    </alternativeName>
    <alternativeName>
        <fullName>Z-FPP synthase</fullName>
        <shortName>Z-FPPS</shortName>
    </alternativeName>
    <alternativeName>
        <fullName>Z-Polyprenyl diphosphate synthase</fullName>
    </alternativeName>
    <alternativeName>
        <fullName>Z-isoprenyl diphosphate synthase</fullName>
    </alternativeName>
</protein>
<gene>
    <name type="ordered locus">MT1118</name>
</gene>
<dbReference type="EC" id="2.5.1.68"/>
<dbReference type="EMBL" id="AE000516">
    <property type="protein sequence ID" value="AAK45374.1"/>
    <property type="molecule type" value="Genomic_DNA"/>
</dbReference>
<dbReference type="PIR" id="D70895">
    <property type="entry name" value="D70895"/>
</dbReference>
<dbReference type="RefSeq" id="WP_003906511.1">
    <property type="nucleotide sequence ID" value="NZ_KK341227.1"/>
</dbReference>
<dbReference type="SMR" id="P9WFF4"/>
<dbReference type="KEGG" id="mtc:MT1118"/>
<dbReference type="PATRIC" id="fig|83331.31.peg.1203"/>
<dbReference type="HOGENOM" id="CLU_038505_2_0_11"/>
<dbReference type="Proteomes" id="UP000001020">
    <property type="component" value="Chromosome"/>
</dbReference>
<dbReference type="GO" id="GO:0005737">
    <property type="term" value="C:cytoplasm"/>
    <property type="evidence" value="ECO:0007669"/>
    <property type="project" value="UniProtKB-SubCell"/>
</dbReference>
<dbReference type="GO" id="GO:0005886">
    <property type="term" value="C:plasma membrane"/>
    <property type="evidence" value="ECO:0007669"/>
    <property type="project" value="UniProtKB-SubCell"/>
</dbReference>
<dbReference type="GO" id="GO:0045547">
    <property type="term" value="F:ditrans,polycis-polyprenyl diphosphate synthase [(2E,6E)-farnesyl diphosphate specific] activity"/>
    <property type="evidence" value="ECO:0007669"/>
    <property type="project" value="TreeGrafter"/>
</dbReference>
<dbReference type="GO" id="GO:0000287">
    <property type="term" value="F:magnesium ion binding"/>
    <property type="evidence" value="ECO:0007669"/>
    <property type="project" value="UniProtKB-UniRule"/>
</dbReference>
<dbReference type="GO" id="GO:0033850">
    <property type="term" value="F:Z-farnesyl diphosphate synthase activity"/>
    <property type="evidence" value="ECO:0007669"/>
    <property type="project" value="UniProtKB-EC"/>
</dbReference>
<dbReference type="GO" id="GO:0016094">
    <property type="term" value="P:polyprenol biosynthetic process"/>
    <property type="evidence" value="ECO:0007669"/>
    <property type="project" value="TreeGrafter"/>
</dbReference>
<dbReference type="CDD" id="cd00475">
    <property type="entry name" value="Cis_IPPS"/>
    <property type="match status" value="1"/>
</dbReference>
<dbReference type="FunFam" id="3.40.1180.10:FF:000003">
    <property type="entry name" value="Isoprenyl transferase 2"/>
    <property type="match status" value="1"/>
</dbReference>
<dbReference type="Gene3D" id="3.40.1180.10">
    <property type="entry name" value="Decaprenyl diphosphate synthase-like"/>
    <property type="match status" value="1"/>
</dbReference>
<dbReference type="HAMAP" id="MF_01139">
    <property type="entry name" value="ISPT"/>
    <property type="match status" value="1"/>
</dbReference>
<dbReference type="InterPro" id="IPR001441">
    <property type="entry name" value="UPP_synth-like"/>
</dbReference>
<dbReference type="InterPro" id="IPR018520">
    <property type="entry name" value="UPP_synth-like_CS"/>
</dbReference>
<dbReference type="InterPro" id="IPR036424">
    <property type="entry name" value="UPP_synth-like_sf"/>
</dbReference>
<dbReference type="NCBIfam" id="NF011403">
    <property type="entry name" value="PRK14828.1"/>
    <property type="match status" value="1"/>
</dbReference>
<dbReference type="NCBIfam" id="TIGR00055">
    <property type="entry name" value="uppS"/>
    <property type="match status" value="1"/>
</dbReference>
<dbReference type="PANTHER" id="PTHR10291:SF43">
    <property type="entry name" value="DEHYDRODOLICHYL DIPHOSPHATE SYNTHASE COMPLEX SUBUNIT DHDDS"/>
    <property type="match status" value="1"/>
</dbReference>
<dbReference type="PANTHER" id="PTHR10291">
    <property type="entry name" value="DEHYDRODOLICHYL DIPHOSPHATE SYNTHASE FAMILY MEMBER"/>
    <property type="match status" value="1"/>
</dbReference>
<dbReference type="Pfam" id="PF01255">
    <property type="entry name" value="Prenyltransf"/>
    <property type="match status" value="1"/>
</dbReference>
<dbReference type="SUPFAM" id="SSF64005">
    <property type="entry name" value="Undecaprenyl diphosphate synthase"/>
    <property type="match status" value="1"/>
</dbReference>
<dbReference type="PROSITE" id="PS01066">
    <property type="entry name" value="UPP_SYNTHASE"/>
    <property type="match status" value="1"/>
</dbReference>
<proteinExistence type="inferred from homology"/>
<feature type="chain" id="PRO_0000428548" description="(2Z,6E)-farnesyl diphosphate synthase">
    <location>
        <begin position="1"/>
        <end position="262"/>
    </location>
</feature>
<feature type="active site" evidence="1">
    <location>
        <position position="40"/>
    </location>
</feature>
<feature type="active site" description="Proton acceptor" evidence="1">
    <location>
        <position position="89"/>
    </location>
</feature>
<feature type="binding site" evidence="1">
    <location>
        <position position="40"/>
    </location>
    <ligand>
        <name>Mg(2+)</name>
        <dbReference type="ChEBI" id="CHEBI:18420"/>
    </ligand>
</feature>
<feature type="binding site" evidence="1">
    <location>
        <begin position="41"/>
        <end position="44"/>
    </location>
    <ligand>
        <name>substrate</name>
    </ligand>
</feature>
<feature type="binding site" evidence="1">
    <location>
        <position position="45"/>
    </location>
    <ligand>
        <name>substrate</name>
    </ligand>
</feature>
<feature type="binding site" evidence="1">
    <location>
        <begin position="86"/>
        <end position="88"/>
    </location>
    <ligand>
        <name>substrate</name>
    </ligand>
</feature>
<feature type="binding site" evidence="1">
    <location>
        <position position="92"/>
    </location>
    <ligand>
        <name>substrate</name>
    </ligand>
</feature>
<feature type="binding site" evidence="1">
    <location>
        <position position="211"/>
    </location>
    <ligand>
        <name>substrate</name>
    </ligand>
</feature>
<feature type="binding site" evidence="1">
    <location>
        <begin position="217"/>
        <end position="219"/>
    </location>
    <ligand>
        <name>substrate</name>
    </ligand>
</feature>
<feature type="binding site" evidence="1">
    <location>
        <position position="230"/>
    </location>
    <ligand>
        <name>Mg(2+)</name>
        <dbReference type="ChEBI" id="CHEBI:18420"/>
    </ligand>
</feature>
<feature type="site" description="Important for determining product length" evidence="1">
    <location>
        <position position="84"/>
    </location>
</feature>
<name>ZFPP_MYCTO</name>
<keyword id="KW-1003">Cell membrane</keyword>
<keyword id="KW-0963">Cytoplasm</keyword>
<keyword id="KW-0460">Magnesium</keyword>
<keyword id="KW-0472">Membrane</keyword>
<keyword id="KW-0479">Metal-binding</keyword>
<keyword id="KW-1185">Reference proteome</keyword>
<keyword id="KW-0808">Transferase</keyword>
<organism>
    <name type="scientific">Mycobacterium tuberculosis (strain CDC 1551 / Oshkosh)</name>
    <dbReference type="NCBI Taxonomy" id="83331"/>
    <lineage>
        <taxon>Bacteria</taxon>
        <taxon>Bacillati</taxon>
        <taxon>Actinomycetota</taxon>
        <taxon>Actinomycetes</taxon>
        <taxon>Mycobacteriales</taxon>
        <taxon>Mycobacteriaceae</taxon>
        <taxon>Mycobacterium</taxon>
        <taxon>Mycobacterium tuberculosis complex</taxon>
    </lineage>
</organism>
<accession>P9WFF4</accession>
<accession>L0T8K3</accession>
<accession>O53434</accession>